<gene>
    <name evidence="1" type="primary">argS</name>
    <name type="ordered locus">DNO_1051</name>
</gene>
<comment type="catalytic activity">
    <reaction evidence="1">
        <text>tRNA(Arg) + L-arginine + ATP = L-arginyl-tRNA(Arg) + AMP + diphosphate</text>
        <dbReference type="Rhea" id="RHEA:20301"/>
        <dbReference type="Rhea" id="RHEA-COMP:9658"/>
        <dbReference type="Rhea" id="RHEA-COMP:9673"/>
        <dbReference type="ChEBI" id="CHEBI:30616"/>
        <dbReference type="ChEBI" id="CHEBI:32682"/>
        <dbReference type="ChEBI" id="CHEBI:33019"/>
        <dbReference type="ChEBI" id="CHEBI:78442"/>
        <dbReference type="ChEBI" id="CHEBI:78513"/>
        <dbReference type="ChEBI" id="CHEBI:456215"/>
        <dbReference type="EC" id="6.1.1.19"/>
    </reaction>
</comment>
<comment type="subunit">
    <text evidence="1">Monomer.</text>
</comment>
<comment type="subcellular location">
    <subcellularLocation>
        <location evidence="1">Cytoplasm</location>
    </subcellularLocation>
</comment>
<comment type="similarity">
    <text evidence="1">Belongs to the class-I aminoacyl-tRNA synthetase family.</text>
</comment>
<sequence>MKNEIQDGLGSALILVAKNHGIDIRLLDQAIEIERCKDPENGDFASNIALKYAKVFKMKPRQLADELVVSVPLMDSVAGMEVAGPGFINIRLSRESITAVLENVVAKKERYGCFENPNARKILVEFVSANPTGPLHVGHGRGAAYGDSLSRLLIANGHQVDREYYINDFGRQMDILALSVYWRYVQECGIGVALPKGIYQGDYVIDIAKKLKEKEGKRLAYPVNEWAPDYPQTWTQEQVDNGDRDRWIDGAIAGLKEKLGQKEYRGVFDLALSMELDDIRGDLEEFGVFFDRWFSERSMSENDMINNALKKVDEAGYLYEKDGAVWFKSTAFGDEKDRVVRRKNGMTTYFSSDISYHFDKYNRGYDQMIDILGADHHGYMARVRASLAALGLDPEKLVIALVQFAVLYKGGEKMQMSTRSGEFVTLRDLREHVGADAARFFYVMRKPEQHLDFDLDLAESNSKDNPFYYVEYAHARCCGMLNKAEEEGYEFSPEAALKCRNALVEPEETALISELHRYPEVVIAAGKQMAPHQVIIYLKELATRWHHYYDVGHKVLHEDEEIRNARLLLTWAVRQVLRNALAIIGVQARERM</sequence>
<protein>
    <recommendedName>
        <fullName evidence="1">Arginine--tRNA ligase</fullName>
        <ecNumber evidence="1">6.1.1.19</ecNumber>
    </recommendedName>
    <alternativeName>
        <fullName evidence="1">Arginyl-tRNA synthetase</fullName>
        <shortName evidence="1">ArgRS</shortName>
    </alternativeName>
</protein>
<accession>A5EXU4</accession>
<keyword id="KW-0030">Aminoacyl-tRNA synthetase</keyword>
<keyword id="KW-0067">ATP-binding</keyword>
<keyword id="KW-0963">Cytoplasm</keyword>
<keyword id="KW-0436">Ligase</keyword>
<keyword id="KW-0547">Nucleotide-binding</keyword>
<keyword id="KW-0648">Protein biosynthesis</keyword>
<keyword id="KW-1185">Reference proteome</keyword>
<proteinExistence type="inferred from homology"/>
<organism>
    <name type="scientific">Dichelobacter nodosus (strain VCS1703A)</name>
    <dbReference type="NCBI Taxonomy" id="246195"/>
    <lineage>
        <taxon>Bacteria</taxon>
        <taxon>Pseudomonadati</taxon>
        <taxon>Pseudomonadota</taxon>
        <taxon>Gammaproteobacteria</taxon>
        <taxon>Cardiobacteriales</taxon>
        <taxon>Cardiobacteriaceae</taxon>
        <taxon>Dichelobacter</taxon>
    </lineage>
</organism>
<evidence type="ECO:0000255" key="1">
    <source>
        <dbReference type="HAMAP-Rule" id="MF_00123"/>
    </source>
</evidence>
<name>SYR_DICNV</name>
<feature type="chain" id="PRO_1000018022" description="Arginine--tRNA ligase">
    <location>
        <begin position="1"/>
        <end position="592"/>
    </location>
</feature>
<feature type="short sequence motif" description="'HIGH' region">
    <location>
        <begin position="129"/>
        <end position="139"/>
    </location>
</feature>
<reference key="1">
    <citation type="journal article" date="2007" name="Nat. Biotechnol.">
        <title>Genome sequence and identification of candidate vaccine antigens from the animal pathogen Dichelobacter nodosus.</title>
        <authorList>
            <person name="Myers G.S.A."/>
            <person name="Parker D."/>
            <person name="Al-Hasani K."/>
            <person name="Kennan R.M."/>
            <person name="Seemann T."/>
            <person name="Ren Q."/>
            <person name="Badger J.H."/>
            <person name="Selengut J.D."/>
            <person name="Deboy R.T."/>
            <person name="Tettelin H."/>
            <person name="Boyce J.D."/>
            <person name="McCarl V.P."/>
            <person name="Han X."/>
            <person name="Nelson W.C."/>
            <person name="Madupu R."/>
            <person name="Mohamoud Y."/>
            <person name="Holley T."/>
            <person name="Fedorova N."/>
            <person name="Khouri H."/>
            <person name="Bottomley S.P."/>
            <person name="Whittington R.J."/>
            <person name="Adler B."/>
            <person name="Songer J.G."/>
            <person name="Rood J.I."/>
            <person name="Paulsen I.T."/>
        </authorList>
    </citation>
    <scope>NUCLEOTIDE SEQUENCE [LARGE SCALE GENOMIC DNA]</scope>
    <source>
        <strain>VCS1703A</strain>
    </source>
</reference>
<dbReference type="EC" id="6.1.1.19" evidence="1"/>
<dbReference type="EMBL" id="CP000513">
    <property type="protein sequence ID" value="ABQ14047.1"/>
    <property type="molecule type" value="Genomic_DNA"/>
</dbReference>
<dbReference type="RefSeq" id="WP_012031358.1">
    <property type="nucleotide sequence ID" value="NC_009446.1"/>
</dbReference>
<dbReference type="SMR" id="A5EXU4"/>
<dbReference type="STRING" id="246195.DNO_1051"/>
<dbReference type="KEGG" id="dno:DNO_1051"/>
<dbReference type="eggNOG" id="COG0018">
    <property type="taxonomic scope" value="Bacteria"/>
</dbReference>
<dbReference type="HOGENOM" id="CLU_006406_0_1_6"/>
<dbReference type="OrthoDB" id="9803211at2"/>
<dbReference type="Proteomes" id="UP000000248">
    <property type="component" value="Chromosome"/>
</dbReference>
<dbReference type="GO" id="GO:0005737">
    <property type="term" value="C:cytoplasm"/>
    <property type="evidence" value="ECO:0007669"/>
    <property type="project" value="UniProtKB-SubCell"/>
</dbReference>
<dbReference type="GO" id="GO:0004814">
    <property type="term" value="F:arginine-tRNA ligase activity"/>
    <property type="evidence" value="ECO:0007669"/>
    <property type="project" value="UniProtKB-UniRule"/>
</dbReference>
<dbReference type="GO" id="GO:0005524">
    <property type="term" value="F:ATP binding"/>
    <property type="evidence" value="ECO:0007669"/>
    <property type="project" value="UniProtKB-UniRule"/>
</dbReference>
<dbReference type="GO" id="GO:0006420">
    <property type="term" value="P:arginyl-tRNA aminoacylation"/>
    <property type="evidence" value="ECO:0007669"/>
    <property type="project" value="UniProtKB-UniRule"/>
</dbReference>
<dbReference type="CDD" id="cd00671">
    <property type="entry name" value="ArgRS_core"/>
    <property type="match status" value="1"/>
</dbReference>
<dbReference type="FunFam" id="1.10.730.10:FF:000008">
    <property type="entry name" value="Arginine--tRNA ligase"/>
    <property type="match status" value="1"/>
</dbReference>
<dbReference type="Gene3D" id="3.30.1360.70">
    <property type="entry name" value="Arginyl tRNA synthetase N-terminal domain"/>
    <property type="match status" value="1"/>
</dbReference>
<dbReference type="Gene3D" id="3.40.50.620">
    <property type="entry name" value="HUPs"/>
    <property type="match status" value="1"/>
</dbReference>
<dbReference type="Gene3D" id="1.10.730.10">
    <property type="entry name" value="Isoleucyl-tRNA Synthetase, Domain 1"/>
    <property type="match status" value="1"/>
</dbReference>
<dbReference type="HAMAP" id="MF_00123">
    <property type="entry name" value="Arg_tRNA_synth"/>
    <property type="match status" value="1"/>
</dbReference>
<dbReference type="InterPro" id="IPR001412">
    <property type="entry name" value="aa-tRNA-synth_I_CS"/>
</dbReference>
<dbReference type="InterPro" id="IPR001278">
    <property type="entry name" value="Arg-tRNA-ligase"/>
</dbReference>
<dbReference type="InterPro" id="IPR005148">
    <property type="entry name" value="Arg-tRNA-synth_N"/>
</dbReference>
<dbReference type="InterPro" id="IPR036695">
    <property type="entry name" value="Arg-tRNA-synth_N_sf"/>
</dbReference>
<dbReference type="InterPro" id="IPR035684">
    <property type="entry name" value="ArgRS_core"/>
</dbReference>
<dbReference type="InterPro" id="IPR008909">
    <property type="entry name" value="DALR_anticod-bd"/>
</dbReference>
<dbReference type="InterPro" id="IPR014729">
    <property type="entry name" value="Rossmann-like_a/b/a_fold"/>
</dbReference>
<dbReference type="InterPro" id="IPR009080">
    <property type="entry name" value="tRNAsynth_Ia_anticodon-bd"/>
</dbReference>
<dbReference type="NCBIfam" id="TIGR00456">
    <property type="entry name" value="argS"/>
    <property type="match status" value="1"/>
</dbReference>
<dbReference type="PANTHER" id="PTHR11956:SF5">
    <property type="entry name" value="ARGININE--TRNA LIGASE, CYTOPLASMIC"/>
    <property type="match status" value="1"/>
</dbReference>
<dbReference type="PANTHER" id="PTHR11956">
    <property type="entry name" value="ARGINYL-TRNA SYNTHETASE"/>
    <property type="match status" value="1"/>
</dbReference>
<dbReference type="Pfam" id="PF03485">
    <property type="entry name" value="Arg_tRNA_synt_N"/>
    <property type="match status" value="1"/>
</dbReference>
<dbReference type="Pfam" id="PF05746">
    <property type="entry name" value="DALR_1"/>
    <property type="match status" value="1"/>
</dbReference>
<dbReference type="Pfam" id="PF00750">
    <property type="entry name" value="tRNA-synt_1d"/>
    <property type="match status" value="2"/>
</dbReference>
<dbReference type="PRINTS" id="PR01038">
    <property type="entry name" value="TRNASYNTHARG"/>
</dbReference>
<dbReference type="SMART" id="SM01016">
    <property type="entry name" value="Arg_tRNA_synt_N"/>
    <property type="match status" value="1"/>
</dbReference>
<dbReference type="SMART" id="SM00836">
    <property type="entry name" value="DALR_1"/>
    <property type="match status" value="1"/>
</dbReference>
<dbReference type="SUPFAM" id="SSF47323">
    <property type="entry name" value="Anticodon-binding domain of a subclass of class I aminoacyl-tRNA synthetases"/>
    <property type="match status" value="1"/>
</dbReference>
<dbReference type="SUPFAM" id="SSF55190">
    <property type="entry name" value="Arginyl-tRNA synthetase (ArgRS), N-terminal 'additional' domain"/>
    <property type="match status" value="1"/>
</dbReference>
<dbReference type="SUPFAM" id="SSF52374">
    <property type="entry name" value="Nucleotidylyl transferase"/>
    <property type="match status" value="1"/>
</dbReference>
<dbReference type="PROSITE" id="PS00178">
    <property type="entry name" value="AA_TRNA_LIGASE_I"/>
    <property type="match status" value="1"/>
</dbReference>